<comment type="function">
    <text evidence="1">Catalyzes the reversible adenylation of nicotinate mononucleotide (NaMN) to nicotinic acid adenine dinucleotide (NaAD).</text>
</comment>
<comment type="catalytic activity">
    <reaction evidence="1">
        <text>nicotinate beta-D-ribonucleotide + ATP + H(+) = deamido-NAD(+) + diphosphate</text>
        <dbReference type="Rhea" id="RHEA:22860"/>
        <dbReference type="ChEBI" id="CHEBI:15378"/>
        <dbReference type="ChEBI" id="CHEBI:30616"/>
        <dbReference type="ChEBI" id="CHEBI:33019"/>
        <dbReference type="ChEBI" id="CHEBI:57502"/>
        <dbReference type="ChEBI" id="CHEBI:58437"/>
        <dbReference type="EC" id="2.7.7.18"/>
    </reaction>
</comment>
<comment type="pathway">
    <text evidence="1">Cofactor biosynthesis; NAD(+) biosynthesis; deamido-NAD(+) from nicotinate D-ribonucleotide: step 1/1.</text>
</comment>
<comment type="similarity">
    <text evidence="1">Belongs to the NadD family.</text>
</comment>
<feature type="chain" id="PRO_0000336727" description="Probable nicotinate-nucleotide adenylyltransferase">
    <location>
        <begin position="1"/>
        <end position="195"/>
    </location>
</feature>
<proteinExistence type="inferred from homology"/>
<accession>Q98EZ6</accession>
<keyword id="KW-0067">ATP-binding</keyword>
<keyword id="KW-0520">NAD</keyword>
<keyword id="KW-0547">Nucleotide-binding</keyword>
<keyword id="KW-0548">Nucleotidyltransferase</keyword>
<keyword id="KW-0662">Pyridine nucleotide biosynthesis</keyword>
<keyword id="KW-0808">Transferase</keyword>
<name>NADD_RHILO</name>
<organism>
    <name type="scientific">Mesorhizobium japonicum (strain LMG 29417 / CECT 9101 / MAFF 303099)</name>
    <name type="common">Mesorhizobium loti (strain MAFF 303099)</name>
    <dbReference type="NCBI Taxonomy" id="266835"/>
    <lineage>
        <taxon>Bacteria</taxon>
        <taxon>Pseudomonadati</taxon>
        <taxon>Pseudomonadota</taxon>
        <taxon>Alphaproteobacteria</taxon>
        <taxon>Hyphomicrobiales</taxon>
        <taxon>Phyllobacteriaceae</taxon>
        <taxon>Mesorhizobium</taxon>
    </lineage>
</organism>
<reference key="1">
    <citation type="journal article" date="2000" name="DNA Res.">
        <title>Complete genome structure of the nitrogen-fixing symbiotic bacterium Mesorhizobium loti.</title>
        <authorList>
            <person name="Kaneko T."/>
            <person name="Nakamura Y."/>
            <person name="Sato S."/>
            <person name="Asamizu E."/>
            <person name="Kato T."/>
            <person name="Sasamoto S."/>
            <person name="Watanabe A."/>
            <person name="Idesawa K."/>
            <person name="Ishikawa A."/>
            <person name="Kawashima K."/>
            <person name="Kimura T."/>
            <person name="Kishida Y."/>
            <person name="Kiyokawa C."/>
            <person name="Kohara M."/>
            <person name="Matsumoto M."/>
            <person name="Matsuno A."/>
            <person name="Mochizuki Y."/>
            <person name="Nakayama S."/>
            <person name="Nakazaki N."/>
            <person name="Shimpo S."/>
            <person name="Sugimoto M."/>
            <person name="Takeuchi C."/>
            <person name="Yamada M."/>
            <person name="Tabata S."/>
        </authorList>
    </citation>
    <scope>NUCLEOTIDE SEQUENCE [LARGE SCALE GENOMIC DNA]</scope>
    <source>
        <strain>LMG 29417 / CECT 9101 / MAFF 303099</strain>
    </source>
</reference>
<protein>
    <recommendedName>
        <fullName evidence="1">Probable nicotinate-nucleotide adenylyltransferase</fullName>
        <ecNumber evidence="1">2.7.7.18</ecNumber>
    </recommendedName>
    <alternativeName>
        <fullName evidence="1">Deamido-NAD(+) diphosphorylase</fullName>
    </alternativeName>
    <alternativeName>
        <fullName evidence="1">Deamido-NAD(+) pyrophosphorylase</fullName>
    </alternativeName>
    <alternativeName>
        <fullName evidence="1">Nicotinate mononucleotide adenylyltransferase</fullName>
        <shortName evidence="1">NaMN adenylyltransferase</shortName>
    </alternativeName>
</protein>
<sequence length="195" mass="21669">MPHAEKGLTVGLFGGSFNPPHAGHALVAEIALRRLALDQLWWMVTPGNPLKSTRELAPLAERLQLSEQIARNPKIKVTAFEAAHHVRYTADTLALVKARNPGVDFVWIMGADSLRDFHRWQRWREIVLTFPIAVIDRPGATLSFLSSVVAKTFDYARIDEGDAPLLARMRAPAWTFIHGPRSSLSSSAIRKMAKG</sequence>
<evidence type="ECO:0000255" key="1">
    <source>
        <dbReference type="HAMAP-Rule" id="MF_00244"/>
    </source>
</evidence>
<dbReference type="EC" id="2.7.7.18" evidence="1"/>
<dbReference type="EMBL" id="BA000012">
    <property type="protein sequence ID" value="BAB50771.1"/>
    <property type="molecule type" value="Genomic_DNA"/>
</dbReference>
<dbReference type="SMR" id="Q98EZ6"/>
<dbReference type="KEGG" id="mlo:mll4008"/>
<dbReference type="eggNOG" id="COG1057">
    <property type="taxonomic scope" value="Bacteria"/>
</dbReference>
<dbReference type="HOGENOM" id="CLU_069765_2_0_5"/>
<dbReference type="UniPathway" id="UPA00253">
    <property type="reaction ID" value="UER00332"/>
</dbReference>
<dbReference type="Proteomes" id="UP000000552">
    <property type="component" value="Chromosome"/>
</dbReference>
<dbReference type="GO" id="GO:0005524">
    <property type="term" value="F:ATP binding"/>
    <property type="evidence" value="ECO:0007669"/>
    <property type="project" value="UniProtKB-KW"/>
</dbReference>
<dbReference type="GO" id="GO:0004515">
    <property type="term" value="F:nicotinate-nucleotide adenylyltransferase activity"/>
    <property type="evidence" value="ECO:0007669"/>
    <property type="project" value="UniProtKB-UniRule"/>
</dbReference>
<dbReference type="GO" id="GO:0009435">
    <property type="term" value="P:NAD biosynthetic process"/>
    <property type="evidence" value="ECO:0007669"/>
    <property type="project" value="UniProtKB-UniRule"/>
</dbReference>
<dbReference type="CDD" id="cd02165">
    <property type="entry name" value="NMNAT"/>
    <property type="match status" value="1"/>
</dbReference>
<dbReference type="Gene3D" id="3.40.50.620">
    <property type="entry name" value="HUPs"/>
    <property type="match status" value="1"/>
</dbReference>
<dbReference type="HAMAP" id="MF_00244">
    <property type="entry name" value="NaMN_adenylyltr"/>
    <property type="match status" value="1"/>
</dbReference>
<dbReference type="InterPro" id="IPR004821">
    <property type="entry name" value="Cyt_trans-like"/>
</dbReference>
<dbReference type="InterPro" id="IPR005248">
    <property type="entry name" value="NadD/NMNAT"/>
</dbReference>
<dbReference type="InterPro" id="IPR014729">
    <property type="entry name" value="Rossmann-like_a/b/a_fold"/>
</dbReference>
<dbReference type="NCBIfam" id="TIGR00482">
    <property type="entry name" value="nicotinate (nicotinamide) nucleotide adenylyltransferase"/>
    <property type="match status" value="1"/>
</dbReference>
<dbReference type="NCBIfam" id="NF000843">
    <property type="entry name" value="PRK00071.2-2"/>
    <property type="match status" value="1"/>
</dbReference>
<dbReference type="NCBIfam" id="NF000845">
    <property type="entry name" value="PRK00071.2-4"/>
    <property type="match status" value="1"/>
</dbReference>
<dbReference type="PANTHER" id="PTHR39321">
    <property type="entry name" value="NICOTINATE-NUCLEOTIDE ADENYLYLTRANSFERASE-RELATED"/>
    <property type="match status" value="1"/>
</dbReference>
<dbReference type="PANTHER" id="PTHR39321:SF3">
    <property type="entry name" value="PHOSPHOPANTETHEINE ADENYLYLTRANSFERASE"/>
    <property type="match status" value="1"/>
</dbReference>
<dbReference type="Pfam" id="PF01467">
    <property type="entry name" value="CTP_transf_like"/>
    <property type="match status" value="1"/>
</dbReference>
<dbReference type="SUPFAM" id="SSF52374">
    <property type="entry name" value="Nucleotidylyl transferase"/>
    <property type="match status" value="1"/>
</dbReference>
<gene>
    <name evidence="1" type="primary">nadD</name>
    <name type="ordered locus">mll4008</name>
</gene>